<keyword id="KW-0119">Carbohydrate metabolism</keyword>
<keyword id="KW-0963">Cytoplasm</keyword>
<keyword id="KW-0378">Hydrolase</keyword>
<keyword id="KW-0460">Magnesium</keyword>
<keyword id="KW-0479">Metal-binding</keyword>
<reference key="1">
    <citation type="journal article" date="2013" name="Proc. Natl. Acad. Sci. U.S.A.">
        <title>Polynucleobacter necessarius, a model for genome reduction in both free-living and symbiotic bacteria.</title>
        <authorList>
            <person name="Boscaro V."/>
            <person name="Felletti M."/>
            <person name="Vannini C."/>
            <person name="Ackerman M.S."/>
            <person name="Chain P.S."/>
            <person name="Malfatti S."/>
            <person name="Vergez L.M."/>
            <person name="Shin M."/>
            <person name="Doak T.G."/>
            <person name="Lynch M."/>
            <person name="Petroni G."/>
        </authorList>
    </citation>
    <scope>NUCLEOTIDE SEQUENCE [LARGE SCALE GENOMIC DNA]</scope>
    <source>
        <strain>STIR1</strain>
    </source>
</reference>
<proteinExistence type="inferred from homology"/>
<dbReference type="EC" id="3.1.3.11" evidence="1"/>
<dbReference type="EMBL" id="CP001010">
    <property type="protein sequence ID" value="ACB44334.1"/>
    <property type="molecule type" value="Genomic_DNA"/>
</dbReference>
<dbReference type="SMR" id="B1XVF7"/>
<dbReference type="STRING" id="452638.Pnec_1187"/>
<dbReference type="KEGG" id="pne:Pnec_1187"/>
<dbReference type="eggNOG" id="COG0158">
    <property type="taxonomic scope" value="Bacteria"/>
</dbReference>
<dbReference type="HOGENOM" id="CLU_039977_0_0_4"/>
<dbReference type="UniPathway" id="UPA00138"/>
<dbReference type="GO" id="GO:0005829">
    <property type="term" value="C:cytosol"/>
    <property type="evidence" value="ECO:0007669"/>
    <property type="project" value="TreeGrafter"/>
</dbReference>
<dbReference type="GO" id="GO:0042132">
    <property type="term" value="F:fructose 1,6-bisphosphate 1-phosphatase activity"/>
    <property type="evidence" value="ECO:0007669"/>
    <property type="project" value="UniProtKB-UniRule"/>
</dbReference>
<dbReference type="GO" id="GO:0000287">
    <property type="term" value="F:magnesium ion binding"/>
    <property type="evidence" value="ECO:0007669"/>
    <property type="project" value="UniProtKB-UniRule"/>
</dbReference>
<dbReference type="GO" id="GO:0030388">
    <property type="term" value="P:fructose 1,6-bisphosphate metabolic process"/>
    <property type="evidence" value="ECO:0007669"/>
    <property type="project" value="TreeGrafter"/>
</dbReference>
<dbReference type="GO" id="GO:0006002">
    <property type="term" value="P:fructose 6-phosphate metabolic process"/>
    <property type="evidence" value="ECO:0007669"/>
    <property type="project" value="TreeGrafter"/>
</dbReference>
<dbReference type="GO" id="GO:0006000">
    <property type="term" value="P:fructose metabolic process"/>
    <property type="evidence" value="ECO:0007669"/>
    <property type="project" value="TreeGrafter"/>
</dbReference>
<dbReference type="GO" id="GO:0006094">
    <property type="term" value="P:gluconeogenesis"/>
    <property type="evidence" value="ECO:0007669"/>
    <property type="project" value="UniProtKB-UniRule"/>
</dbReference>
<dbReference type="GO" id="GO:0005986">
    <property type="term" value="P:sucrose biosynthetic process"/>
    <property type="evidence" value="ECO:0007669"/>
    <property type="project" value="TreeGrafter"/>
</dbReference>
<dbReference type="CDD" id="cd00354">
    <property type="entry name" value="FBPase"/>
    <property type="match status" value="1"/>
</dbReference>
<dbReference type="FunFam" id="3.40.190.80:FF:000011">
    <property type="entry name" value="Fructose-1,6-bisphosphatase class 1"/>
    <property type="match status" value="1"/>
</dbReference>
<dbReference type="Gene3D" id="3.40.190.80">
    <property type="match status" value="1"/>
</dbReference>
<dbReference type="Gene3D" id="3.30.540.10">
    <property type="entry name" value="Fructose-1,6-Bisphosphatase, subunit A, domain 1"/>
    <property type="match status" value="1"/>
</dbReference>
<dbReference type="HAMAP" id="MF_01855">
    <property type="entry name" value="FBPase_class1"/>
    <property type="match status" value="1"/>
</dbReference>
<dbReference type="InterPro" id="IPR044015">
    <property type="entry name" value="FBPase_C_dom"/>
</dbReference>
<dbReference type="InterPro" id="IPR000146">
    <property type="entry name" value="FBPase_class-1"/>
</dbReference>
<dbReference type="InterPro" id="IPR033391">
    <property type="entry name" value="FBPase_N"/>
</dbReference>
<dbReference type="InterPro" id="IPR028343">
    <property type="entry name" value="FBPtase"/>
</dbReference>
<dbReference type="NCBIfam" id="NF006779">
    <property type="entry name" value="PRK09293.1-3"/>
    <property type="match status" value="1"/>
</dbReference>
<dbReference type="NCBIfam" id="NF006780">
    <property type="entry name" value="PRK09293.1-4"/>
    <property type="match status" value="1"/>
</dbReference>
<dbReference type="PANTHER" id="PTHR11556">
    <property type="entry name" value="FRUCTOSE-1,6-BISPHOSPHATASE-RELATED"/>
    <property type="match status" value="1"/>
</dbReference>
<dbReference type="PANTHER" id="PTHR11556:SF35">
    <property type="entry name" value="SEDOHEPTULOSE-1,7-BISPHOSPHATASE, CHLOROPLASTIC"/>
    <property type="match status" value="1"/>
</dbReference>
<dbReference type="Pfam" id="PF00316">
    <property type="entry name" value="FBPase"/>
    <property type="match status" value="1"/>
</dbReference>
<dbReference type="Pfam" id="PF18913">
    <property type="entry name" value="FBPase_C"/>
    <property type="match status" value="1"/>
</dbReference>
<dbReference type="PIRSF" id="PIRSF500210">
    <property type="entry name" value="FBPtase"/>
    <property type="match status" value="1"/>
</dbReference>
<dbReference type="PIRSF" id="PIRSF000904">
    <property type="entry name" value="FBPtase_SBPase"/>
    <property type="match status" value="1"/>
</dbReference>
<dbReference type="PRINTS" id="PR00115">
    <property type="entry name" value="F16BPHPHTASE"/>
</dbReference>
<dbReference type="SUPFAM" id="SSF56655">
    <property type="entry name" value="Carbohydrate phosphatase"/>
    <property type="match status" value="1"/>
</dbReference>
<sequence length="339" mass="36803">MKTGEIPLSSSTYINFKQYLASVKPAGAALPTGLQDLLIAVVNTCSKLSHEVAQGALIGLLGPAGTGNVQGEVQQKLDIIANDLLIDGVQGCKSLAGLASEEMELPVPVQGTGDYLLLFDPLDGSSNIDVNVSIGTIFSVLKKQDPAAPLQTSDFLLSGRHQVAAGYVVYGPQTTMALTLGDGVVMFTLNKVTGEFLLIKDSVTISHSTKEFAINMSNMRHWADPVRRYVEECLAGVSGARDKDFNMRWIASMVADVHRVLSRGGVFMYPWDQREPHKPGKLRLMYEVNPMSFLVEQAGGVSTNGTDLIMDLQPTDLHERVSVMLGSKEEIDRIQHYHS</sequence>
<accession>B1XVF7</accession>
<organism>
    <name type="scientific">Polynucleobacter necessarius subsp. necessarius (strain STIR1)</name>
    <dbReference type="NCBI Taxonomy" id="452638"/>
    <lineage>
        <taxon>Bacteria</taxon>
        <taxon>Pseudomonadati</taxon>
        <taxon>Pseudomonadota</taxon>
        <taxon>Betaproteobacteria</taxon>
        <taxon>Burkholderiales</taxon>
        <taxon>Burkholderiaceae</taxon>
        <taxon>Polynucleobacter</taxon>
    </lineage>
</organism>
<gene>
    <name evidence="1" type="primary">fbp</name>
    <name type="ordered locus">Pnec_1187</name>
</gene>
<comment type="catalytic activity">
    <reaction evidence="1">
        <text>beta-D-fructose 1,6-bisphosphate + H2O = beta-D-fructose 6-phosphate + phosphate</text>
        <dbReference type="Rhea" id="RHEA:11064"/>
        <dbReference type="ChEBI" id="CHEBI:15377"/>
        <dbReference type="ChEBI" id="CHEBI:32966"/>
        <dbReference type="ChEBI" id="CHEBI:43474"/>
        <dbReference type="ChEBI" id="CHEBI:57634"/>
        <dbReference type="EC" id="3.1.3.11"/>
    </reaction>
</comment>
<comment type="cofactor">
    <cofactor evidence="1">
        <name>Mg(2+)</name>
        <dbReference type="ChEBI" id="CHEBI:18420"/>
    </cofactor>
    <text evidence="1">Binds 2 magnesium ions per subunit.</text>
</comment>
<comment type="pathway">
    <text evidence="1">Carbohydrate biosynthesis; gluconeogenesis.</text>
</comment>
<comment type="subunit">
    <text evidence="1">Homotetramer.</text>
</comment>
<comment type="subcellular location">
    <subcellularLocation>
        <location evidence="1">Cytoplasm</location>
    </subcellularLocation>
</comment>
<comment type="similarity">
    <text evidence="1">Belongs to the FBPase class 1 family.</text>
</comment>
<name>F16PA_POLNS</name>
<feature type="chain" id="PRO_0000364631" description="Fructose-1,6-bisphosphatase class 1">
    <location>
        <begin position="1"/>
        <end position="339"/>
    </location>
</feature>
<feature type="binding site" evidence="1">
    <location>
        <position position="101"/>
    </location>
    <ligand>
        <name>Mg(2+)</name>
        <dbReference type="ChEBI" id="CHEBI:18420"/>
        <label>1</label>
    </ligand>
</feature>
<feature type="binding site" evidence="1">
    <location>
        <position position="120"/>
    </location>
    <ligand>
        <name>Mg(2+)</name>
        <dbReference type="ChEBI" id="CHEBI:18420"/>
        <label>1</label>
    </ligand>
</feature>
<feature type="binding site" evidence="1">
    <location>
        <position position="120"/>
    </location>
    <ligand>
        <name>Mg(2+)</name>
        <dbReference type="ChEBI" id="CHEBI:18420"/>
        <label>2</label>
    </ligand>
</feature>
<feature type="binding site" evidence="1">
    <location>
        <position position="122"/>
    </location>
    <ligand>
        <name>Mg(2+)</name>
        <dbReference type="ChEBI" id="CHEBI:18420"/>
        <label>1</label>
    </ligand>
</feature>
<feature type="binding site" evidence="1">
    <location>
        <begin position="123"/>
        <end position="126"/>
    </location>
    <ligand>
        <name>substrate</name>
    </ligand>
</feature>
<feature type="binding site" evidence="1">
    <location>
        <position position="123"/>
    </location>
    <ligand>
        <name>Mg(2+)</name>
        <dbReference type="ChEBI" id="CHEBI:18420"/>
        <label>2</label>
    </ligand>
</feature>
<feature type="binding site" evidence="1">
    <location>
        <position position="215"/>
    </location>
    <ligand>
        <name>substrate</name>
    </ligand>
</feature>
<feature type="binding site" evidence="1">
    <location>
        <position position="281"/>
    </location>
    <ligand>
        <name>substrate</name>
    </ligand>
</feature>
<feature type="binding site" evidence="1">
    <location>
        <position position="287"/>
    </location>
    <ligand>
        <name>Mg(2+)</name>
        <dbReference type="ChEBI" id="CHEBI:18420"/>
        <label>2</label>
    </ligand>
</feature>
<evidence type="ECO:0000255" key="1">
    <source>
        <dbReference type="HAMAP-Rule" id="MF_01855"/>
    </source>
</evidence>
<protein>
    <recommendedName>
        <fullName evidence="1">Fructose-1,6-bisphosphatase class 1</fullName>
        <shortName evidence="1">FBPase class 1</shortName>
        <ecNumber evidence="1">3.1.3.11</ecNumber>
    </recommendedName>
    <alternativeName>
        <fullName evidence="1">D-fructose-1,6-bisphosphate 1-phosphohydrolase class 1</fullName>
    </alternativeName>
</protein>